<dbReference type="EMBL" id="AE000782">
    <property type="protein sequence ID" value="AAB90587.1"/>
    <property type="molecule type" value="Genomic_DNA"/>
</dbReference>
<dbReference type="PIR" id="A69332">
    <property type="entry name" value="A69332"/>
</dbReference>
<dbReference type="RefSeq" id="WP_010878160.1">
    <property type="nucleotide sequence ID" value="NC_000917.1"/>
</dbReference>
<dbReference type="SMR" id="O29600"/>
<dbReference type="STRING" id="224325.AF_0657"/>
<dbReference type="PaxDb" id="224325-AF_0657"/>
<dbReference type="EnsemblBacteria" id="AAB90587">
    <property type="protein sequence ID" value="AAB90587"/>
    <property type="gene ID" value="AF_0657"/>
</dbReference>
<dbReference type="KEGG" id="afu:AF_0657"/>
<dbReference type="eggNOG" id="arCOG02487">
    <property type="taxonomic scope" value="Archaea"/>
</dbReference>
<dbReference type="HOGENOM" id="CLU_149091_0_0_2"/>
<dbReference type="OrthoDB" id="384895at2157"/>
<dbReference type="Proteomes" id="UP000002199">
    <property type="component" value="Chromosome"/>
</dbReference>
<dbReference type="GO" id="GO:0016020">
    <property type="term" value="C:membrane"/>
    <property type="evidence" value="ECO:0007669"/>
    <property type="project" value="UniProtKB-SubCell"/>
</dbReference>
<dbReference type="Gene3D" id="2.60.40.10">
    <property type="entry name" value="Immunoglobulins"/>
    <property type="match status" value="1"/>
</dbReference>
<dbReference type="InterPro" id="IPR013783">
    <property type="entry name" value="Ig-like_fold"/>
</dbReference>
<gene>
    <name type="ordered locus">AF_0657</name>
</gene>
<organism>
    <name type="scientific">Archaeoglobus fulgidus (strain ATCC 49558 / DSM 4304 / JCM 9628 / NBRC 100126 / VC-16)</name>
    <dbReference type="NCBI Taxonomy" id="224325"/>
    <lineage>
        <taxon>Archaea</taxon>
        <taxon>Methanobacteriati</taxon>
        <taxon>Methanobacteriota</taxon>
        <taxon>Archaeoglobi</taxon>
        <taxon>Archaeoglobales</taxon>
        <taxon>Archaeoglobaceae</taxon>
        <taxon>Archaeoglobus</taxon>
    </lineage>
</organism>
<accession>O29600</accession>
<sequence>MSSSNLSSRKTRISAHFLDAAPAEDEIVTVEGWLTYYDEEKKSWIPLERAQVTIYVDGREVGKAETNEYGMFTFAFPAPYKGRHKLEVRFKGKAGYESSSKSLDFQVMEREQKLKLGRLARDVLLLIIALVFLLFVAIFITNMLR</sequence>
<name>Y657_ARCFU</name>
<feature type="signal peptide" evidence="1">
    <location>
        <begin position="1"/>
        <end position="23"/>
    </location>
</feature>
<feature type="chain" id="PRO_0000013644" description="Uncharacterized protein AF_0657">
    <location>
        <begin position="24"/>
        <end position="145"/>
    </location>
</feature>
<feature type="transmembrane region" description="Helical" evidence="1">
    <location>
        <begin position="123"/>
        <end position="140"/>
    </location>
</feature>
<proteinExistence type="inferred from homology"/>
<evidence type="ECO:0000255" key="1"/>
<evidence type="ECO:0000305" key="2"/>
<reference key="1">
    <citation type="journal article" date="1997" name="Nature">
        <title>The complete genome sequence of the hyperthermophilic, sulphate-reducing archaeon Archaeoglobus fulgidus.</title>
        <authorList>
            <person name="Klenk H.-P."/>
            <person name="Clayton R.A."/>
            <person name="Tomb J.-F."/>
            <person name="White O."/>
            <person name="Nelson K.E."/>
            <person name="Ketchum K.A."/>
            <person name="Dodson R.J."/>
            <person name="Gwinn M.L."/>
            <person name="Hickey E.K."/>
            <person name="Peterson J.D."/>
            <person name="Richardson D.L."/>
            <person name="Kerlavage A.R."/>
            <person name="Graham D.E."/>
            <person name="Kyrpides N.C."/>
            <person name="Fleischmann R.D."/>
            <person name="Quackenbush J."/>
            <person name="Lee N.H."/>
            <person name="Sutton G.G."/>
            <person name="Gill S.R."/>
            <person name="Kirkness E.F."/>
            <person name="Dougherty B.A."/>
            <person name="McKenney K."/>
            <person name="Adams M.D."/>
            <person name="Loftus B.J."/>
            <person name="Peterson S.N."/>
            <person name="Reich C.I."/>
            <person name="McNeil L.K."/>
            <person name="Badger J.H."/>
            <person name="Glodek A."/>
            <person name="Zhou L."/>
            <person name="Overbeek R."/>
            <person name="Gocayne J.D."/>
            <person name="Weidman J.F."/>
            <person name="McDonald L.A."/>
            <person name="Utterback T.R."/>
            <person name="Cotton M.D."/>
            <person name="Spriggs T."/>
            <person name="Artiach P."/>
            <person name="Kaine B.P."/>
            <person name="Sykes S.M."/>
            <person name="Sadow P.W."/>
            <person name="D'Andrea K.P."/>
            <person name="Bowman C."/>
            <person name="Fujii C."/>
            <person name="Garland S.A."/>
            <person name="Mason T.M."/>
            <person name="Olsen G.J."/>
            <person name="Fraser C.M."/>
            <person name="Smith H.O."/>
            <person name="Woese C.R."/>
            <person name="Venter J.C."/>
        </authorList>
    </citation>
    <scope>NUCLEOTIDE SEQUENCE [LARGE SCALE GENOMIC DNA]</scope>
    <source>
        <strain>ATCC 49558 / DSM 4304 / JCM 9628 / NBRC 100126 / VC-16</strain>
    </source>
</reference>
<comment type="subcellular location">
    <subcellularLocation>
        <location evidence="2">Membrane</location>
        <topology evidence="2">Single-pass membrane protein</topology>
    </subcellularLocation>
</comment>
<keyword id="KW-0472">Membrane</keyword>
<keyword id="KW-1185">Reference proteome</keyword>
<keyword id="KW-0732">Signal</keyword>
<keyword id="KW-0812">Transmembrane</keyword>
<keyword id="KW-1133">Transmembrane helix</keyword>
<protein>
    <recommendedName>
        <fullName>Uncharacterized protein AF_0657</fullName>
    </recommendedName>
</protein>